<organism>
    <name type="scientific">Streptococcus pneumoniae serotype 4 (strain ATCC BAA-334 / TIGR4)</name>
    <dbReference type="NCBI Taxonomy" id="170187"/>
    <lineage>
        <taxon>Bacteria</taxon>
        <taxon>Bacillati</taxon>
        <taxon>Bacillota</taxon>
        <taxon>Bacilli</taxon>
        <taxon>Lactobacillales</taxon>
        <taxon>Streptococcaceae</taxon>
        <taxon>Streptococcus</taxon>
    </lineage>
</organism>
<comment type="function">
    <text evidence="2">Involved in the breakdown of mucin-type O-linked glycans. Specifically removes the T-antigen disaccharide (Gal-beta-1,3-GalNAc-alpha) from extracellular host glycoproteins. Representative of a broadly important class of virulence factors.</text>
</comment>
<comment type="catalytic activity">
    <reaction evidence="2">
        <text>a 3-O-[beta-D-galactosyl-(1-&gt;3)-N-acetyl-alpha-D-galactosaminyl]-L-threonyl-[protein] + H2O = beta-D-galactosyl-(1-&gt;3)-N-acetyl-D-galactosamine + L-threonyl-[protein]</text>
        <dbReference type="Rhea" id="RHEA:54540"/>
        <dbReference type="Rhea" id="RHEA-COMP:11060"/>
        <dbReference type="Rhea" id="RHEA-COMP:13923"/>
        <dbReference type="ChEBI" id="CHEBI:15377"/>
        <dbReference type="ChEBI" id="CHEBI:30013"/>
        <dbReference type="ChEBI" id="CHEBI:137950"/>
        <dbReference type="ChEBI" id="CHEBI:546807"/>
        <dbReference type="EC" id="3.2.1.97"/>
    </reaction>
</comment>
<comment type="catalytic activity">
    <reaction evidence="2">
        <text>a 3-O-[beta-D-galactosyl-(1-&gt;3)-N-acetyl-alpha-D-galactosaminyl]-L-seryl-[protein] + H2O = beta-D-galactosyl-(1-&gt;3)-N-acetyl-D-galactosamine + L-seryl-[protein]</text>
        <dbReference type="Rhea" id="RHEA:30983"/>
        <dbReference type="Rhea" id="RHEA-COMP:9863"/>
        <dbReference type="Rhea" id="RHEA-COMP:13922"/>
        <dbReference type="ChEBI" id="CHEBI:15377"/>
        <dbReference type="ChEBI" id="CHEBI:29999"/>
        <dbReference type="ChEBI" id="CHEBI:137949"/>
        <dbReference type="ChEBI" id="CHEBI:546807"/>
        <dbReference type="EC" id="3.2.1.97"/>
    </reaction>
</comment>
<comment type="subcellular location">
    <subcellularLocation>
        <location evidence="8">Secreted</location>
        <location evidence="8">Cell wall</location>
        <topology evidence="8">Peptidoglycan-anchor</topology>
    </subcellularLocation>
    <text>Has been shown to be localized at the cell surface.</text>
</comment>
<comment type="domain">
    <text evidence="1">Is a multimodular protein that comprises seven distinct domains. The catalytic glycoside hydrolase domain resides in domain 3 (residues 602-893). Possesses four potential carbohydrate-binding modules (CBMs) (By similarity).</text>
</comment>
<comment type="biotechnology">
    <text evidence="6">Was identified as a vaccine antigen as it provides significant cross-protection in a stringent mouse model of lethal sepsis.</text>
</comment>
<comment type="miscellaneous">
    <text evidence="1">The hydrolysis reaction catalyzed by SpGH101 proceeds with retention of the anomeric configuration.</text>
</comment>
<comment type="similarity">
    <text evidence="7">Belongs to the glycosyl hydrolase 101 family. A subfamily.</text>
</comment>
<feature type="signal peptide" evidence="3">
    <location>
        <begin position="1"/>
        <end position="39"/>
    </location>
</feature>
<feature type="chain" id="PRO_0000408868" description="Endo-alpha-N-acetylgalactosaminidase">
    <location>
        <begin position="40"/>
        <end position="1738"/>
    </location>
</feature>
<feature type="propeptide" id="PRO_0000408869" description="Removed by sortase" evidence="4">
    <location>
        <begin position="1739"/>
        <end position="1767"/>
    </location>
</feature>
<feature type="region of interest" description="Disordered" evidence="5">
    <location>
        <begin position="61"/>
        <end position="124"/>
    </location>
</feature>
<feature type="region of interest" description="Disordered" evidence="5">
    <location>
        <begin position="301"/>
        <end position="324"/>
    </location>
</feature>
<feature type="region of interest" description="Catalytic" evidence="1">
    <location>
        <begin position="602"/>
        <end position="893"/>
    </location>
</feature>
<feature type="region of interest" description="Disordered" evidence="5">
    <location>
        <begin position="1711"/>
        <end position="1730"/>
    </location>
</feature>
<feature type="short sequence motif" description="LPXTG sorting signal" evidence="4">
    <location>
        <begin position="1735"/>
        <end position="1739"/>
    </location>
</feature>
<feature type="compositionally biased region" description="Basic and acidic residues" evidence="5">
    <location>
        <begin position="61"/>
        <end position="75"/>
    </location>
</feature>
<feature type="compositionally biased region" description="Basic and acidic residues" evidence="5">
    <location>
        <begin position="84"/>
        <end position="111"/>
    </location>
</feature>
<feature type="compositionally biased region" description="Low complexity" evidence="5">
    <location>
        <begin position="112"/>
        <end position="124"/>
    </location>
</feature>
<feature type="compositionally biased region" description="Basic and acidic residues" evidence="5">
    <location>
        <begin position="304"/>
        <end position="324"/>
    </location>
</feature>
<feature type="compositionally biased region" description="Basic and acidic residues" evidence="5">
    <location>
        <begin position="1717"/>
        <end position="1730"/>
    </location>
</feature>
<feature type="active site" description="Nucleophile" evidence="1">
    <location>
        <position position="764"/>
    </location>
</feature>
<feature type="active site" description="Proton donor/acceptor" evidence="1">
    <location>
        <position position="796"/>
    </location>
</feature>
<feature type="binding site" evidence="1">
    <location>
        <position position="577"/>
    </location>
    <ligand>
        <name>Ca(2+)</name>
        <dbReference type="ChEBI" id="CHEBI:29108"/>
        <label>1</label>
    </ligand>
</feature>
<feature type="binding site" evidence="1">
    <location>
        <position position="579"/>
    </location>
    <ligand>
        <name>Ca(2+)</name>
        <dbReference type="ChEBI" id="CHEBI:29108"/>
        <label>1</label>
    </ligand>
</feature>
<feature type="binding site" evidence="1">
    <location>
        <position position="581"/>
    </location>
    <ligand>
        <name>Ca(2+)</name>
        <dbReference type="ChEBI" id="CHEBI:29108"/>
        <label>1</label>
    </ligand>
</feature>
<feature type="binding site" evidence="1">
    <location>
        <position position="583"/>
    </location>
    <ligand>
        <name>Ca(2+)</name>
        <dbReference type="ChEBI" id="CHEBI:29108"/>
        <label>1</label>
    </ligand>
</feature>
<feature type="binding site" evidence="1">
    <location>
        <position position="588"/>
    </location>
    <ligand>
        <name>Ca(2+)</name>
        <dbReference type="ChEBI" id="CHEBI:29108"/>
        <label>1</label>
    </ligand>
</feature>
<feature type="binding site" evidence="1">
    <location>
        <position position="658"/>
    </location>
    <ligand>
        <name>substrate</name>
    </ligand>
</feature>
<feature type="binding site" evidence="1">
    <location>
        <position position="1233"/>
    </location>
    <ligand>
        <name>Ca(2+)</name>
        <dbReference type="ChEBI" id="CHEBI:29108"/>
        <label>2</label>
    </ligand>
</feature>
<feature type="binding site" evidence="1">
    <location>
        <position position="1235"/>
    </location>
    <ligand>
        <name>Ca(2+)</name>
        <dbReference type="ChEBI" id="CHEBI:29108"/>
        <label>2</label>
    </ligand>
</feature>
<feature type="binding site" evidence="1">
    <location>
        <position position="1281"/>
    </location>
    <ligand>
        <name>Ca(2+)</name>
        <dbReference type="ChEBI" id="CHEBI:29108"/>
        <label>2</label>
    </ligand>
</feature>
<feature type="binding site" evidence="1">
    <location>
        <position position="1284"/>
    </location>
    <ligand>
        <name>Ca(2+)</name>
        <dbReference type="ChEBI" id="CHEBI:29108"/>
        <label>2</label>
    </ligand>
</feature>
<feature type="binding site" evidence="1">
    <location>
        <position position="1411"/>
    </location>
    <ligand>
        <name>Ca(2+)</name>
        <dbReference type="ChEBI" id="CHEBI:29108"/>
        <label>2</label>
    </ligand>
</feature>
<feature type="modified residue" description="Pentaglycyl murein peptidoglycan amidated threonine" evidence="4">
    <location>
        <position position="1738"/>
    </location>
</feature>
<feature type="strand" evidence="9">
    <location>
        <begin position="331"/>
        <end position="335"/>
    </location>
</feature>
<feature type="strand" evidence="9">
    <location>
        <begin position="337"/>
        <end position="344"/>
    </location>
</feature>
<feature type="strand" evidence="9">
    <location>
        <begin position="350"/>
        <end position="355"/>
    </location>
</feature>
<feature type="strand" evidence="9">
    <location>
        <begin position="358"/>
        <end position="361"/>
    </location>
</feature>
<feature type="strand" evidence="9">
    <location>
        <begin position="370"/>
        <end position="372"/>
    </location>
</feature>
<feature type="strand" evidence="9">
    <location>
        <begin position="375"/>
        <end position="377"/>
    </location>
</feature>
<feature type="strand" evidence="9">
    <location>
        <begin position="380"/>
        <end position="387"/>
    </location>
</feature>
<feature type="strand" evidence="9">
    <location>
        <begin position="390"/>
        <end position="399"/>
    </location>
</feature>
<feature type="helix" evidence="9">
    <location>
        <begin position="400"/>
        <end position="402"/>
    </location>
</feature>
<feature type="strand" evidence="9">
    <location>
        <begin position="404"/>
        <end position="415"/>
    </location>
</feature>
<feature type="strand" evidence="9">
    <location>
        <begin position="418"/>
        <end position="428"/>
    </location>
</feature>
<feature type="helix" evidence="9">
    <location>
        <begin position="441"/>
        <end position="443"/>
    </location>
</feature>
<feature type="strand" evidence="9">
    <location>
        <begin position="447"/>
        <end position="449"/>
    </location>
</feature>
<feature type="strand" evidence="9">
    <location>
        <begin position="455"/>
        <end position="459"/>
    </location>
</feature>
<feature type="strand" evidence="9">
    <location>
        <begin position="466"/>
        <end position="470"/>
    </location>
</feature>
<feature type="strand" evidence="9">
    <location>
        <begin position="481"/>
        <end position="485"/>
    </location>
</feature>
<feature type="strand" evidence="9">
    <location>
        <begin position="494"/>
        <end position="503"/>
    </location>
</feature>
<feature type="strand" evidence="9">
    <location>
        <begin position="508"/>
        <end position="513"/>
    </location>
</feature>
<feature type="strand" evidence="9">
    <location>
        <begin position="519"/>
        <end position="521"/>
    </location>
</feature>
<feature type="helix" evidence="9">
    <location>
        <begin position="522"/>
        <end position="524"/>
    </location>
</feature>
<feature type="strand" evidence="9">
    <location>
        <begin position="529"/>
        <end position="536"/>
    </location>
</feature>
<feature type="strand" evidence="9">
    <location>
        <begin position="539"/>
        <end position="546"/>
    </location>
</feature>
<feature type="helix" evidence="9">
    <location>
        <begin position="562"/>
        <end position="564"/>
    </location>
</feature>
<feature type="strand" evidence="9">
    <location>
        <begin position="569"/>
        <end position="576"/>
    </location>
</feature>
<feature type="strand" evidence="9">
    <location>
        <begin position="578"/>
        <end position="582"/>
    </location>
</feature>
<feature type="helix" evidence="9">
    <location>
        <begin position="586"/>
        <end position="593"/>
    </location>
</feature>
<feature type="turn" evidence="9">
    <location>
        <begin position="594"/>
        <end position="596"/>
    </location>
</feature>
<feature type="helix" evidence="9">
    <location>
        <begin position="603"/>
        <end position="608"/>
    </location>
</feature>
<feature type="strand" evidence="9">
    <location>
        <begin position="609"/>
        <end position="616"/>
    </location>
</feature>
<feature type="helix" evidence="9">
    <location>
        <begin position="626"/>
        <end position="639"/>
    </location>
</feature>
<feature type="strand" evidence="9">
    <location>
        <begin position="644"/>
        <end position="650"/>
    </location>
</feature>
<feature type="turn" evidence="9">
    <location>
        <begin position="669"/>
        <end position="672"/>
    </location>
</feature>
<feature type="helix" evidence="9">
    <location>
        <begin position="673"/>
        <end position="684"/>
    </location>
</feature>
<feature type="helix" evidence="9">
    <location>
        <begin position="685"/>
        <end position="687"/>
    </location>
</feature>
<feature type="strand" evidence="9">
    <location>
        <begin position="689"/>
        <end position="700"/>
    </location>
</feature>
<feature type="helix" evidence="9">
    <location>
        <begin position="709"/>
        <end position="711"/>
    </location>
</feature>
<feature type="strand" evidence="9">
    <location>
        <begin position="722"/>
        <end position="733"/>
    </location>
</feature>
<feature type="helix" evidence="9">
    <location>
        <begin position="735"/>
        <end position="740"/>
    </location>
</feature>
<feature type="helix" evidence="9">
    <location>
        <begin position="743"/>
        <end position="754"/>
    </location>
</feature>
<feature type="strand" evidence="9">
    <location>
        <begin position="760"/>
        <end position="765"/>
    </location>
</feature>
<feature type="helix" evidence="9">
    <location>
        <begin position="776"/>
        <end position="788"/>
    </location>
</feature>
<feature type="strand" evidence="9">
    <location>
        <begin position="792"/>
        <end position="797"/>
    </location>
</feature>
<feature type="turn" evidence="9">
    <location>
        <begin position="802"/>
        <end position="804"/>
    </location>
</feature>
<feature type="strand" evidence="9">
    <location>
        <begin position="806"/>
        <end position="808"/>
    </location>
</feature>
<feature type="helix" evidence="9">
    <location>
        <begin position="809"/>
        <end position="812"/>
    </location>
</feature>
<feature type="strand" evidence="9">
    <location>
        <begin position="821"/>
        <end position="823"/>
    </location>
</feature>
<feature type="helix" evidence="9">
    <location>
        <begin position="827"/>
        <end position="833"/>
    </location>
</feature>
<feature type="helix" evidence="9">
    <location>
        <begin position="834"/>
        <end position="836"/>
    </location>
</feature>
<feature type="helix" evidence="9">
    <location>
        <begin position="845"/>
        <end position="847"/>
    </location>
</feature>
<feature type="helix" evidence="9">
    <location>
        <begin position="849"/>
        <end position="851"/>
    </location>
</feature>
<feature type="strand" evidence="9">
    <location>
        <begin position="864"/>
        <end position="866"/>
    </location>
</feature>
<feature type="helix" evidence="9">
    <location>
        <begin position="867"/>
        <end position="869"/>
    </location>
</feature>
<feature type="helix" evidence="9">
    <location>
        <begin position="873"/>
        <end position="890"/>
    </location>
</feature>
<feature type="strand" evidence="9">
    <location>
        <begin position="893"/>
        <end position="900"/>
    </location>
</feature>
<feature type="strand" evidence="9">
    <location>
        <begin position="904"/>
        <end position="908"/>
    </location>
</feature>
<feature type="strand" evidence="9">
    <location>
        <begin position="911"/>
        <end position="915"/>
    </location>
</feature>
<feature type="strand" evidence="9">
    <location>
        <begin position="918"/>
        <end position="924"/>
    </location>
</feature>
<feature type="strand" evidence="9">
    <location>
        <begin position="930"/>
        <end position="936"/>
    </location>
</feature>
<feature type="helix" evidence="9">
    <location>
        <begin position="943"/>
        <end position="946"/>
    </location>
</feature>
<feature type="strand" evidence="9">
    <location>
        <begin position="948"/>
        <end position="952"/>
    </location>
</feature>
<feature type="strand" evidence="9">
    <location>
        <begin position="955"/>
        <end position="959"/>
    </location>
</feature>
<feature type="strand" evidence="9">
    <location>
        <begin position="962"/>
        <end position="967"/>
    </location>
</feature>
<feature type="helix" evidence="9">
    <location>
        <begin position="978"/>
        <end position="980"/>
    </location>
</feature>
<feature type="strand" evidence="9">
    <location>
        <begin position="982"/>
        <end position="989"/>
    </location>
</feature>
<feature type="strand" evidence="9">
    <location>
        <begin position="993"/>
        <end position="996"/>
    </location>
</feature>
<feature type="helix" evidence="9">
    <location>
        <begin position="999"/>
        <end position="1002"/>
    </location>
</feature>
<feature type="strand" evidence="9">
    <location>
        <begin position="1007"/>
        <end position="1012"/>
    </location>
</feature>
<feature type="strand" evidence="9">
    <location>
        <begin position="1015"/>
        <end position="1021"/>
    </location>
</feature>
<feature type="strand" evidence="9">
    <location>
        <begin position="1028"/>
        <end position="1031"/>
    </location>
</feature>
<feature type="strand" evidence="9">
    <location>
        <begin position="1039"/>
        <end position="1044"/>
    </location>
</feature>
<feature type="turn" evidence="9">
    <location>
        <begin position="1053"/>
        <end position="1058"/>
    </location>
</feature>
<feature type="strand" evidence="9">
    <location>
        <begin position="1072"/>
        <end position="1076"/>
    </location>
</feature>
<feature type="helix" evidence="9">
    <location>
        <begin position="1078"/>
        <end position="1080"/>
    </location>
</feature>
<feature type="strand" evidence="9">
    <location>
        <begin position="1081"/>
        <end position="1085"/>
    </location>
</feature>
<feature type="strand" evidence="9">
    <location>
        <begin position="1091"/>
        <end position="1095"/>
    </location>
</feature>
<feature type="strand" evidence="9">
    <location>
        <begin position="1097"/>
        <end position="1100"/>
    </location>
</feature>
<feature type="strand" evidence="9">
    <location>
        <begin position="1102"/>
        <end position="1107"/>
    </location>
</feature>
<feature type="strand" evidence="9">
    <location>
        <begin position="1116"/>
        <end position="1125"/>
    </location>
</feature>
<feature type="strand" evidence="9">
    <location>
        <begin position="1127"/>
        <end position="1129"/>
    </location>
</feature>
<feature type="strand" evidence="9">
    <location>
        <begin position="1131"/>
        <end position="1136"/>
    </location>
</feature>
<feature type="strand" evidence="9">
    <location>
        <begin position="1141"/>
        <end position="1148"/>
    </location>
</feature>
<feature type="helix" evidence="9">
    <location>
        <begin position="1164"/>
        <end position="1166"/>
    </location>
</feature>
<feature type="strand" evidence="9">
    <location>
        <begin position="1176"/>
        <end position="1183"/>
    </location>
</feature>
<feature type="strand" evidence="9">
    <location>
        <begin position="1192"/>
        <end position="1197"/>
    </location>
</feature>
<feature type="strand" evidence="9">
    <location>
        <begin position="1199"/>
        <end position="1202"/>
    </location>
</feature>
<feature type="strand" evidence="9">
    <location>
        <begin position="1204"/>
        <end position="1213"/>
    </location>
</feature>
<feature type="strand" evidence="9">
    <location>
        <begin position="1222"/>
        <end position="1225"/>
    </location>
</feature>
<feature type="strand" evidence="9">
    <location>
        <begin position="1230"/>
        <end position="1232"/>
    </location>
</feature>
<feature type="turn" evidence="10">
    <location>
        <begin position="1240"/>
        <end position="1243"/>
    </location>
</feature>
<feature type="strand" evidence="9">
    <location>
        <begin position="1244"/>
        <end position="1246"/>
    </location>
</feature>
<feature type="strand" evidence="9">
    <location>
        <begin position="1251"/>
        <end position="1254"/>
    </location>
</feature>
<feature type="strand" evidence="9">
    <location>
        <begin position="1256"/>
        <end position="1261"/>
    </location>
</feature>
<feature type="turn" evidence="9">
    <location>
        <begin position="1264"/>
        <end position="1267"/>
    </location>
</feature>
<feature type="helix" evidence="9">
    <location>
        <begin position="1271"/>
        <end position="1273"/>
    </location>
</feature>
<feature type="strand" evidence="9">
    <location>
        <begin position="1284"/>
        <end position="1288"/>
    </location>
</feature>
<feature type="strand" evidence="9">
    <location>
        <begin position="1296"/>
        <end position="1301"/>
    </location>
</feature>
<feature type="turn" evidence="9">
    <location>
        <begin position="1303"/>
        <end position="1305"/>
    </location>
</feature>
<feature type="strand" evidence="9">
    <location>
        <begin position="1313"/>
        <end position="1324"/>
    </location>
</feature>
<feature type="strand" evidence="9">
    <location>
        <begin position="1327"/>
        <end position="1336"/>
    </location>
</feature>
<feature type="strand" evidence="9">
    <location>
        <begin position="1350"/>
        <end position="1353"/>
    </location>
</feature>
<feature type="strand" evidence="10">
    <location>
        <begin position="1357"/>
        <end position="1360"/>
    </location>
</feature>
<feature type="strand" evidence="9">
    <location>
        <begin position="1365"/>
        <end position="1373"/>
    </location>
</feature>
<feature type="strand" evidence="9">
    <location>
        <begin position="1379"/>
        <end position="1385"/>
    </location>
</feature>
<feature type="helix" evidence="9">
    <location>
        <begin position="1397"/>
        <end position="1403"/>
    </location>
</feature>
<feature type="turn" evidence="9">
    <location>
        <begin position="1404"/>
        <end position="1406"/>
    </location>
</feature>
<feature type="strand" evidence="9">
    <location>
        <begin position="1408"/>
        <end position="1418"/>
    </location>
</feature>
<feature type="helix" evidence="9">
    <location>
        <begin position="1422"/>
        <end position="1426"/>
    </location>
</feature>
<evidence type="ECO:0000250" key="1"/>
<evidence type="ECO:0000250" key="2">
    <source>
        <dbReference type="UniProtKB" id="Q8DR60"/>
    </source>
</evidence>
<evidence type="ECO:0000255" key="3"/>
<evidence type="ECO:0000255" key="4">
    <source>
        <dbReference type="PROSITE-ProRule" id="PRU00477"/>
    </source>
</evidence>
<evidence type="ECO:0000256" key="5">
    <source>
        <dbReference type="SAM" id="MobiDB-lite"/>
    </source>
</evidence>
<evidence type="ECO:0000269" key="6">
    <source>
    </source>
</evidence>
<evidence type="ECO:0000305" key="7"/>
<evidence type="ECO:0000305" key="8">
    <source>
    </source>
</evidence>
<evidence type="ECO:0007829" key="9">
    <source>
        <dbReference type="PDB" id="5A57"/>
    </source>
</evidence>
<evidence type="ECO:0007829" key="10">
    <source>
        <dbReference type="PDB" id="5A5A"/>
    </source>
</evidence>
<protein>
    <recommendedName>
        <fullName>Endo-alpha-N-acetylgalactosaminidase</fullName>
        <ecNumber evidence="2">3.2.1.97</ecNumber>
    </recommendedName>
    <alternativeName>
        <fullName>SpGH101</fullName>
    </alternativeName>
</protein>
<proteinExistence type="evidence at protein level"/>
<dbReference type="EC" id="3.2.1.97" evidence="2"/>
<dbReference type="EMBL" id="AE005672">
    <property type="protein sequence ID" value="ABC75807.1"/>
    <property type="molecule type" value="Genomic_DNA"/>
</dbReference>
<dbReference type="RefSeq" id="WP_001032461.1">
    <property type="nucleotide sequence ID" value="NZ_CP155539.1"/>
</dbReference>
<dbReference type="PDB" id="5A55">
    <property type="method" value="X-ray"/>
    <property type="resolution" value="1.85 A"/>
    <property type="chains" value="A=317-1425"/>
</dbReference>
<dbReference type="PDB" id="5A56">
    <property type="method" value="X-ray"/>
    <property type="resolution" value="1.80 A"/>
    <property type="chains" value="A=317-1425"/>
</dbReference>
<dbReference type="PDB" id="5A57">
    <property type="method" value="X-ray"/>
    <property type="resolution" value="1.46 A"/>
    <property type="chains" value="A=317-1426"/>
</dbReference>
<dbReference type="PDB" id="5A58">
    <property type="method" value="X-ray"/>
    <property type="resolution" value="1.80 A"/>
    <property type="chains" value="A=317-1426"/>
</dbReference>
<dbReference type="PDB" id="5A59">
    <property type="method" value="X-ray"/>
    <property type="resolution" value="2.50 A"/>
    <property type="chains" value="A=317-1426"/>
</dbReference>
<dbReference type="PDB" id="5A5A">
    <property type="method" value="X-ray"/>
    <property type="resolution" value="1.75 A"/>
    <property type="chains" value="A=317-1426"/>
</dbReference>
<dbReference type="PDBsum" id="5A55"/>
<dbReference type="PDBsum" id="5A56"/>
<dbReference type="PDBsum" id="5A57"/>
<dbReference type="PDBsum" id="5A58"/>
<dbReference type="PDBsum" id="5A59"/>
<dbReference type="PDBsum" id="5A5A"/>
<dbReference type="SMR" id="Q2MGH6"/>
<dbReference type="CAZy" id="CBM32">
    <property type="family name" value="Carbohydrate-Binding Module Family 32"/>
</dbReference>
<dbReference type="CAZy" id="GH101">
    <property type="family name" value="Glycoside Hydrolase Family 101"/>
</dbReference>
<dbReference type="PaxDb" id="170187-SP_0368"/>
<dbReference type="EnsemblBacteria" id="ABC75807">
    <property type="protein sequence ID" value="ABC75807"/>
    <property type="gene ID" value="SP_0368"/>
</dbReference>
<dbReference type="KEGG" id="spn:SP_0368"/>
<dbReference type="eggNOG" id="COG0366">
    <property type="taxonomic scope" value="Bacteria"/>
</dbReference>
<dbReference type="PhylomeDB" id="Q2MGH6"/>
<dbReference type="BioCyc" id="SPNE170187:G1FZB-379-MONOMER"/>
<dbReference type="EvolutionaryTrace" id="Q2MGH6"/>
<dbReference type="Proteomes" id="UP000000585">
    <property type="component" value="Chromosome"/>
</dbReference>
<dbReference type="GO" id="GO:0005576">
    <property type="term" value="C:extracellular region"/>
    <property type="evidence" value="ECO:0007669"/>
    <property type="project" value="UniProtKB-KW"/>
</dbReference>
<dbReference type="GO" id="GO:0030246">
    <property type="term" value="F:carbohydrate binding"/>
    <property type="evidence" value="ECO:0007669"/>
    <property type="project" value="InterPro"/>
</dbReference>
<dbReference type="GO" id="GO:0033926">
    <property type="term" value="F:endo-alpha-N-acetylgalactosaminidase activity"/>
    <property type="evidence" value="ECO:0007669"/>
    <property type="project" value="UniProtKB-EC"/>
</dbReference>
<dbReference type="GO" id="GO:0046872">
    <property type="term" value="F:metal ion binding"/>
    <property type="evidence" value="ECO:0007669"/>
    <property type="project" value="UniProtKB-KW"/>
</dbReference>
<dbReference type="CDD" id="cd14244">
    <property type="entry name" value="GH_101_like"/>
    <property type="match status" value="1"/>
</dbReference>
<dbReference type="Gene3D" id="2.60.120.870">
    <property type="match status" value="1"/>
</dbReference>
<dbReference type="Gene3D" id="2.70.98.10">
    <property type="match status" value="1"/>
</dbReference>
<dbReference type="Gene3D" id="6.10.140.660">
    <property type="match status" value="1"/>
</dbReference>
<dbReference type="Gene3D" id="2.60.120.260">
    <property type="entry name" value="Galactose-binding domain-like"/>
    <property type="match status" value="3"/>
</dbReference>
<dbReference type="Gene3D" id="3.20.20.80">
    <property type="entry name" value="Glycosidases"/>
    <property type="match status" value="1"/>
</dbReference>
<dbReference type="Gene3D" id="2.60.40.1180">
    <property type="entry name" value="Golgi alpha-mannosidase II"/>
    <property type="match status" value="1"/>
</dbReference>
<dbReference type="InterPro" id="IPR025706">
    <property type="entry name" value="Endoa_GalNAc"/>
</dbReference>
<dbReference type="InterPro" id="IPR000421">
    <property type="entry name" value="FA58C"/>
</dbReference>
<dbReference type="InterPro" id="IPR040633">
    <property type="entry name" value="Gal_mutarotas_3"/>
</dbReference>
<dbReference type="InterPro" id="IPR008979">
    <property type="entry name" value="Galactose-bd-like_sf"/>
</dbReference>
<dbReference type="InterPro" id="IPR014718">
    <property type="entry name" value="GH-type_carb-bd"/>
</dbReference>
<dbReference type="InterPro" id="IPR049314">
    <property type="entry name" value="GH101_dom-5"/>
</dbReference>
<dbReference type="InterPro" id="IPR040502">
    <property type="entry name" value="GH101_dom-6"/>
</dbReference>
<dbReference type="InterPro" id="IPR040575">
    <property type="entry name" value="GH101_N"/>
</dbReference>
<dbReference type="InterPro" id="IPR035364">
    <property type="entry name" value="Glyco_hyd_101_beta"/>
</dbReference>
<dbReference type="InterPro" id="IPR013780">
    <property type="entry name" value="Glyco_hydro_b"/>
</dbReference>
<dbReference type="InterPro" id="IPR019931">
    <property type="entry name" value="LPXTG_anchor"/>
</dbReference>
<dbReference type="InterPro" id="IPR005877">
    <property type="entry name" value="YSIRK_signal_dom"/>
</dbReference>
<dbReference type="NCBIfam" id="NF040533">
    <property type="entry name" value="endo_SpGH101"/>
    <property type="match status" value="1"/>
</dbReference>
<dbReference type="NCBIfam" id="TIGR01167">
    <property type="entry name" value="LPXTG_anchor"/>
    <property type="match status" value="1"/>
</dbReference>
<dbReference type="NCBIfam" id="TIGR01168">
    <property type="entry name" value="YSIRK_signal"/>
    <property type="match status" value="1"/>
</dbReference>
<dbReference type="Pfam" id="PF00754">
    <property type="entry name" value="F5_F8_type_C"/>
    <property type="match status" value="1"/>
</dbReference>
<dbReference type="Pfam" id="PF18080">
    <property type="entry name" value="Gal_mutarotas_3"/>
    <property type="match status" value="1"/>
</dbReference>
<dbReference type="Pfam" id="PF17974">
    <property type="entry name" value="GalBD_like"/>
    <property type="match status" value="1"/>
</dbReference>
<dbReference type="Pfam" id="PF21466">
    <property type="entry name" value="GH101_dom-5"/>
    <property type="match status" value="1"/>
</dbReference>
<dbReference type="Pfam" id="PF17995">
    <property type="entry name" value="GH101_N"/>
    <property type="match status" value="1"/>
</dbReference>
<dbReference type="Pfam" id="PF17451">
    <property type="entry name" value="Glyco_hyd_101C"/>
    <property type="match status" value="1"/>
</dbReference>
<dbReference type="Pfam" id="PF12905">
    <property type="entry name" value="Glyco_hydro_101"/>
    <property type="match status" value="1"/>
</dbReference>
<dbReference type="Pfam" id="PF00746">
    <property type="entry name" value="Gram_pos_anchor"/>
    <property type="match status" value="1"/>
</dbReference>
<dbReference type="Pfam" id="PF04650">
    <property type="entry name" value="YSIRK_signal"/>
    <property type="match status" value="1"/>
</dbReference>
<dbReference type="SUPFAM" id="SSF49785">
    <property type="entry name" value="Galactose-binding domain-like"/>
    <property type="match status" value="1"/>
</dbReference>
<dbReference type="PROSITE" id="PS50847">
    <property type="entry name" value="GRAM_POS_ANCHORING"/>
    <property type="match status" value="1"/>
</dbReference>
<keyword id="KW-0002">3D-structure</keyword>
<keyword id="KW-0106">Calcium</keyword>
<keyword id="KW-0134">Cell wall</keyword>
<keyword id="KW-0326">Glycosidase</keyword>
<keyword id="KW-0378">Hydrolase</keyword>
<keyword id="KW-0479">Metal-binding</keyword>
<keyword id="KW-0572">Peptidoglycan-anchor</keyword>
<keyword id="KW-1185">Reference proteome</keyword>
<keyword id="KW-0964">Secreted</keyword>
<keyword id="KW-0732">Signal</keyword>
<keyword id="KW-0843">Virulence</keyword>
<sequence length="1767" mass="196060">MNKGLFEKRCKYSIRKFSLGVASVMIGAAFFGTSPVLADSVQSGSTANLPADLATALATAKENDGRDFEAPKVGEDQGSPEVTDGPKTEEELLALEKEKPAEEKPKEDKPAAAKPETPKTVTPEWQTVANKEQQGTVTIREEKGVRYNQLSSTAQNDNAGKPALFEKKGLTVDANGNATVDLTFKDDSEKGKSRFGVFLKFKDTKNNVFVGYDKDGWFWEYKSPTTSTWYRGSRVAAPETGSTNRLSITLKSDGQLNASNNDVNLFDTVTLPAAVNDHLKNEKKILLKAGSYDDERTVVSVKTDNQEGVKTEDTPAEKETGPEVDDSKVTYDTIQSKVLKAVIDQAFPRVKEYSLNGHTLPGQVQQFNQVFINNHRITPEVTYKKINETTAEYLMKLRDDAHLINAEMTVRLQVVDNQLHFDVTKIVNHNQVTPGQKIDDESKLLSSISFLGNALVSVSSNQTGAKFDGATMSNNTHVSGDDHIDVTNPMKDLAKGYMYGFVSTDKLAAGVWSNSQNSYGGGSNDWTRLTAYKETVGNANYVGIHSSEWQWEKAYKGIVFPEYTKELPSAKVVITEDANADKNVDWQDGAIAYRSIMNNPQGWEKVKDITAYRIAMNFGSQAQNPFLMTLDGIKKINLHTDGLGQGVLLKGYGSEGHDSGHLNYADIGKRIGGVEDFKTLIEKAKKYGAHLGIHVNASETYPESKYFNEKILRKNPDGSYSYGWNWLDQGINIDAAYDLAHGRLARWEDLKKKLGDGLDFIYVDVWGNGQSGDNGAWATHVLAKEINKQGWRFAIEWGHGGEYDSTFHHWAADLTYGGYTNKGINSAITRFIRNHQKDAWVGDYRSYGGAANYPLLGGYSMKDFEGWQGRSDYNGYVTNLFAHDVMTKYFQHFTVSKWENGTPVTMTDNGSTYKWTPEMRVELVDADNNKVVVTRKSNDVNSPQYRERTVTLNGRVIQDGSAYLTPWNWDANGKKLSTDKEKMYYFNTQAGATTWTLPSDWAKSKVYLYKLTDQGKTEEQELTVKDGKITLDLLANQPYVLYRSKQTNPEMSWSEGMHIYDQGFNSGTLKHWTISGDASKAEIVKSQGANDMLRIQGNKEKVSLTQKLTGLKPNTKYAVYVGVDNRSNAKASITVNTGEKEVTTYTNKSLALNYVKAYAHNTRRDNATVDDTSYFQNMYAFFTTGADVSNVTLTLSREAGDQATYFDEIRTFENNSSMYGDKHDTGKGTFKQDFENVAQGIFPFVVGGVEGVEDNRTHLSEKHNPYTQRGWNGKKVDDVIEGNWSLKTNGLVSRRNLVYQTIPQNFRFEAGKTYRVTFEYEAGSDNTYAFVVGKGEFQSGRRGTQASNLEMHELPNTWTDSKKAKKATFLVTGAETGDTWVGIYSTGNASNTRGDSGGNANFRGYNDFMMDNLQIEEITLTGKMLTENALKNYLPTVAMTNYTKESMDALKEAVFNLSQADDDISVEEARAEIAKIEALKNALVQKKTALVADDFASLTAPAQAQEGLANAFDGNVSSLWHTSWNGGDVGKPATMVLKEPTEITGLRYVPRGSGSNGNLRDVKLVVTDESGKEHTFTATDWPNNNKPKDIDFGKTIKAKKIVLTGTKTYGDGGDKYQSAAELIFTRPQVAETPLDLSGYEAALVKAQKLTDKDNQEEVASVQASMKYATDNHLLTERMVEYFADYLNQLKDSATKPDAPTVEKPEFKLRSLASEQGKTPDYKQEIARPETPEQILPATGESQSDTALILASVSLALSALFVVKTKKD</sequence>
<accession>Q2MGH6</accession>
<name>GH101_STRPN</name>
<gene>
    <name type="ordered locus">SP_0368</name>
</gene>
<reference key="1">
    <citation type="journal article" date="2001" name="Science">
        <title>Complete genome sequence of a virulent isolate of Streptococcus pneumoniae.</title>
        <authorList>
            <person name="Tettelin H."/>
            <person name="Nelson K.E."/>
            <person name="Paulsen I.T."/>
            <person name="Eisen J.A."/>
            <person name="Read T.D."/>
            <person name="Peterson S.N."/>
            <person name="Heidelberg J.F."/>
            <person name="DeBoy R.T."/>
            <person name="Haft D.H."/>
            <person name="Dodson R.J."/>
            <person name="Durkin A.S."/>
            <person name="Gwinn M.L."/>
            <person name="Kolonay J.F."/>
            <person name="Nelson W.C."/>
            <person name="Peterson J.D."/>
            <person name="Umayam L.A."/>
            <person name="White O."/>
            <person name="Salzberg S.L."/>
            <person name="Lewis M.R."/>
            <person name="Radune D."/>
            <person name="Holtzapple E.K."/>
            <person name="Khouri H.M."/>
            <person name="Wolf A.M."/>
            <person name="Utterback T.R."/>
            <person name="Hansen C.L."/>
            <person name="McDonald L.A."/>
            <person name="Feldblyum T.V."/>
            <person name="Angiuoli S.V."/>
            <person name="Dickinson T."/>
            <person name="Hickey E.K."/>
            <person name="Holt I.E."/>
            <person name="Loftus B.J."/>
            <person name="Yang F."/>
            <person name="Smith H.O."/>
            <person name="Venter J.C."/>
            <person name="Dougherty B.A."/>
            <person name="Morrison D.A."/>
            <person name="Hollingshead S.K."/>
            <person name="Fraser C.M."/>
        </authorList>
    </citation>
    <scope>NUCLEOTIDE SEQUENCE [LARGE SCALE GENOMIC DNA]</scope>
    <source>
        <strain>ATCC BAA-334 / TIGR4</strain>
    </source>
</reference>
<reference key="2">
    <citation type="journal article" date="2008" name="J. Exp. Med.">
        <title>Discovery of a novel class of highly conserved vaccine antigens using genomic scale antigenic fingerprinting of pneumococcus with human antibodies.</title>
        <authorList>
            <person name="Giefing C."/>
            <person name="Meinke A.L."/>
            <person name="Hanner M."/>
            <person name="Henics T."/>
            <person name="Bui M.D."/>
            <person name="Gelbmann D."/>
            <person name="Lundberg U."/>
            <person name="Senn B.M."/>
            <person name="Schunn M."/>
            <person name="Habel A."/>
            <person name="Henriques-Normark B."/>
            <person name="Ortqvist A."/>
            <person name="Kalin M."/>
            <person name="von Gabain A."/>
            <person name="Nagy E."/>
        </authorList>
    </citation>
    <scope>BIOTECHNOLOGY</scope>
    <scope>SUBCELLULAR LOCATION</scope>
    <source>
        <strain>ATCC BAA-334 / TIGR4</strain>
    </source>
</reference>
<reference key="3">
    <citation type="journal article" date="2010" name="J. Bioinform. Comput. Biol.">
        <title>GH101 family of glycoside hydrolases: subfamily structure and evolutionary connections with other families.</title>
        <authorList>
            <person name="Naumoff D.G."/>
        </authorList>
    </citation>
    <scope>FAMILY ASSIGNMENT</scope>
</reference>